<name>F151A_RAT</name>
<reference key="1">
    <citation type="journal article" date="2004" name="Genome Res.">
        <title>The status, quality, and expansion of the NIH full-length cDNA project: the Mammalian Gene Collection (MGC).</title>
        <authorList>
            <consortium name="The MGC Project Team"/>
        </authorList>
    </citation>
    <scope>NUCLEOTIDE SEQUENCE [LARGE SCALE MRNA]</scope>
    <source>
        <tissue>Kidney</tissue>
    </source>
</reference>
<protein>
    <recommendedName>
        <fullName>Protein FAM151A</fullName>
    </recommendedName>
</protein>
<feature type="chain" id="PRO_0000310958" description="Protein FAM151A">
    <location>
        <begin position="1"/>
        <end position="608"/>
    </location>
</feature>
<feature type="transmembrane region" description="Helical" evidence="1">
    <location>
        <begin position="14"/>
        <end position="34"/>
    </location>
</feature>
<feature type="region of interest" description="Disordered" evidence="2">
    <location>
        <begin position="588"/>
        <end position="608"/>
    </location>
</feature>
<evidence type="ECO:0000255" key="1"/>
<evidence type="ECO:0000256" key="2">
    <source>
        <dbReference type="SAM" id="MobiDB-lite"/>
    </source>
</evidence>
<evidence type="ECO:0000305" key="3"/>
<gene>
    <name type="primary">Fam151a</name>
</gene>
<organism>
    <name type="scientific">Rattus norvegicus</name>
    <name type="common">Rat</name>
    <dbReference type="NCBI Taxonomy" id="10116"/>
    <lineage>
        <taxon>Eukaryota</taxon>
        <taxon>Metazoa</taxon>
        <taxon>Chordata</taxon>
        <taxon>Craniata</taxon>
        <taxon>Vertebrata</taxon>
        <taxon>Euteleostomi</taxon>
        <taxon>Mammalia</taxon>
        <taxon>Eutheria</taxon>
        <taxon>Euarchontoglires</taxon>
        <taxon>Glires</taxon>
        <taxon>Rodentia</taxon>
        <taxon>Myomorpha</taxon>
        <taxon>Muroidea</taxon>
        <taxon>Muridae</taxon>
        <taxon>Murinae</taxon>
        <taxon>Rattus</taxon>
    </lineage>
</organism>
<dbReference type="EMBL" id="BC081977">
    <property type="protein sequence ID" value="AAH81977.1"/>
    <property type="molecule type" value="mRNA"/>
</dbReference>
<dbReference type="RefSeq" id="NP_001005558.1">
    <property type="nucleotide sequence ID" value="NM_001005558.1"/>
</dbReference>
<dbReference type="FunCoup" id="Q642A7">
    <property type="interactions" value="50"/>
</dbReference>
<dbReference type="STRING" id="10116.ENSRNOP00000010288"/>
<dbReference type="iPTMnet" id="Q642A7"/>
<dbReference type="PhosphoSitePlus" id="Q642A7"/>
<dbReference type="PaxDb" id="10116-ENSRNOP00000010288"/>
<dbReference type="Ensembl" id="ENSRNOT00000010288.6">
    <property type="protein sequence ID" value="ENSRNOP00000010288.4"/>
    <property type="gene ID" value="ENSRNOG00000007799.6"/>
</dbReference>
<dbReference type="GeneID" id="313430"/>
<dbReference type="KEGG" id="rno:313430"/>
<dbReference type="UCSC" id="RGD:1359194">
    <property type="organism name" value="rat"/>
</dbReference>
<dbReference type="AGR" id="RGD:1359194"/>
<dbReference type="CTD" id="338094"/>
<dbReference type="RGD" id="1359194">
    <property type="gene designation" value="Fam151a"/>
</dbReference>
<dbReference type="eggNOG" id="KOG3748">
    <property type="taxonomic scope" value="Eukaryota"/>
</dbReference>
<dbReference type="GeneTree" id="ENSGT00530000063681"/>
<dbReference type="HOGENOM" id="CLU_033162_2_0_1"/>
<dbReference type="InParanoid" id="Q642A7"/>
<dbReference type="OMA" id="AHQVYYD"/>
<dbReference type="OrthoDB" id="54226at9989"/>
<dbReference type="PhylomeDB" id="Q642A7"/>
<dbReference type="TreeFam" id="TF315079"/>
<dbReference type="PRO" id="PR:Q642A7"/>
<dbReference type="Proteomes" id="UP000002494">
    <property type="component" value="Chromosome 5"/>
</dbReference>
<dbReference type="Bgee" id="ENSRNOG00000007799">
    <property type="expression patterns" value="Expressed in adult mammalian kidney and 17 other cell types or tissues"/>
</dbReference>
<dbReference type="GO" id="GO:0005615">
    <property type="term" value="C:extracellular space"/>
    <property type="evidence" value="ECO:0000318"/>
    <property type="project" value="GO_Central"/>
</dbReference>
<dbReference type="GO" id="GO:0016020">
    <property type="term" value="C:membrane"/>
    <property type="evidence" value="ECO:0007669"/>
    <property type="project" value="UniProtKB-SubCell"/>
</dbReference>
<dbReference type="InterPro" id="IPR019356">
    <property type="entry name" value="Memorin"/>
</dbReference>
<dbReference type="PANTHER" id="PTHR21184">
    <property type="entry name" value="MENORIN (DENDRITIC BRANCHING PROTEIN)"/>
    <property type="match status" value="1"/>
</dbReference>
<dbReference type="PANTHER" id="PTHR21184:SF4">
    <property type="entry name" value="PROTEIN FAM151A"/>
    <property type="match status" value="1"/>
</dbReference>
<dbReference type="Pfam" id="PF10223">
    <property type="entry name" value="Menorin"/>
    <property type="match status" value="2"/>
</dbReference>
<keyword id="KW-0472">Membrane</keyword>
<keyword id="KW-1185">Reference proteome</keyword>
<keyword id="KW-0812">Transmembrane</keyword>
<keyword id="KW-1133">Transmembrane helix</keyword>
<comment type="subcellular location">
    <subcellularLocation>
        <location evidence="3">Membrane</location>
        <topology evidence="3">Single-pass membrane protein</topology>
    </subcellularLocation>
</comment>
<comment type="similarity">
    <text evidence="3">Belongs to the menorin family.</text>
</comment>
<proteinExistence type="evidence at transcript level"/>
<sequence>MSCKKCCSSSQTKWILAGSVSMTLVLAISMILGLTLYQRTRPGCENDAVCRPDADMLDYLQNIGQISHRDGLLVTWYHAANSKKEMEAALNSDVMVLEADVTVEGFNTANETEVPIMAHPPAIYSDNTLKEWLEAVLASSQKGIKLDFKSLKAVGPSLDLLRQLTEAGRIRRPVWINADILKGPNVPISTEVNATQFLALVQEKYPKATISPGFTTLYVHQLPNSTYTQAMVETMEELVRALPQKVTFPMRAVMTRAAWPHFSWLLSQSERYSLTLWQGASDPVSVEDLLFIRDNSAPHQIYYDLFEPVLSQFKQLALNTTRKRTFYTGGSLIPVLQQPKGDGLEVEWLALEVNDKGRKAAITVPDREGMILLDVGLQEPEVGNPVPVLRTPGGSVLTLESCLLHLAVHATRWSIHVNITEPAALRPSLATLAHLSTLGHLPWPVWVGATVSYGSFVVPGHIAGRELLTAVAEVFPHVTVAPAWPEEMLGSGYQEQMVTEMLELCQGLRQPVSFQLQAGPLGQSPANTVARLLAFSPRATVTVYHSSAGNSYADVWAGLWAARAVDRTRVYYRIPQEYRKDLLAHVDRHRPSSRTGPSYVEGFPGESR</sequence>
<accession>Q642A7</accession>